<proteinExistence type="evidence at transcript level"/>
<gene>
    <name evidence="8" type="primary">Fdx2</name>
    <name evidence="8" type="synonym">Fdxh2</name>
    <name evidence="8" type="ORF">CG1319</name>
</gene>
<name>ADXH2_DROME</name>
<dbReference type="EMBL" id="AE014296">
    <property type="protein sequence ID" value="AAF47883.2"/>
    <property type="molecule type" value="Genomic_DNA"/>
</dbReference>
<dbReference type="EMBL" id="AY071001">
    <property type="protein sequence ID" value="AAL48623.1"/>
    <property type="molecule type" value="mRNA"/>
</dbReference>
<dbReference type="EMBL" id="AY119160">
    <property type="protein sequence ID" value="AAM51020.1"/>
    <property type="molecule type" value="mRNA"/>
</dbReference>
<dbReference type="EMBL" id="KX531926">
    <property type="protein sequence ID" value="ANY27736.1"/>
    <property type="molecule type" value="mRNA"/>
</dbReference>
<dbReference type="RefSeq" id="NP_647889.2">
    <property type="nucleotide sequence ID" value="NM_139632.3"/>
</dbReference>
<dbReference type="SMR" id="Q8SZA8"/>
<dbReference type="FunCoup" id="Q8SZA8">
    <property type="interactions" value="687"/>
</dbReference>
<dbReference type="IntAct" id="Q8SZA8">
    <property type="interactions" value="5"/>
</dbReference>
<dbReference type="STRING" id="7227.FBpp0289999"/>
<dbReference type="PaxDb" id="7227-FBpp0289999"/>
<dbReference type="DNASU" id="38530"/>
<dbReference type="EnsemblMetazoa" id="FBtr0300775">
    <property type="protein sequence ID" value="FBpp0289999"/>
    <property type="gene ID" value="FBgn0035529"/>
</dbReference>
<dbReference type="GeneID" id="38530"/>
<dbReference type="KEGG" id="dme:Dmel_CG1319"/>
<dbReference type="UCSC" id="CG1319-RA">
    <property type="organism name" value="d. melanogaster"/>
</dbReference>
<dbReference type="AGR" id="FB:FBgn0035529"/>
<dbReference type="CTD" id="112812"/>
<dbReference type="FlyBase" id="FBgn0035529">
    <property type="gene designation" value="Fdx2"/>
</dbReference>
<dbReference type="VEuPathDB" id="VectorBase:FBgn0035529"/>
<dbReference type="eggNOG" id="KOG3309">
    <property type="taxonomic scope" value="Eukaryota"/>
</dbReference>
<dbReference type="GeneTree" id="ENSGT00940000166318"/>
<dbReference type="HOGENOM" id="CLU_082632_2_2_1"/>
<dbReference type="InParanoid" id="Q8SZA8"/>
<dbReference type="OMA" id="NAYIRNC"/>
<dbReference type="OrthoDB" id="268593at2759"/>
<dbReference type="PhylomeDB" id="Q8SZA8"/>
<dbReference type="Reactome" id="R-DME-1362409">
    <property type="pathway name" value="Mitochondrial iron-sulfur cluster biogenesis"/>
</dbReference>
<dbReference type="Reactome" id="R-DME-2395516">
    <property type="pathway name" value="Electron transport from NADPH to Ferredoxin"/>
</dbReference>
<dbReference type="Reactome" id="R-DME-9857492">
    <property type="pathway name" value="Protein lipoylation"/>
</dbReference>
<dbReference type="BioGRID-ORCS" id="38530">
    <property type="hits" value="1 hit in 3 CRISPR screens"/>
</dbReference>
<dbReference type="ChiTaRS" id="Fdx2">
    <property type="organism name" value="fly"/>
</dbReference>
<dbReference type="GenomeRNAi" id="38530"/>
<dbReference type="PRO" id="PR:Q8SZA8"/>
<dbReference type="Proteomes" id="UP000000803">
    <property type="component" value="Chromosome 3L"/>
</dbReference>
<dbReference type="Bgee" id="FBgn0035529">
    <property type="expression patterns" value="Expressed in adult Malpighian tubule (Drosophila) and 165 other cell types or tissues"/>
</dbReference>
<dbReference type="GO" id="GO:0005759">
    <property type="term" value="C:mitochondrial matrix"/>
    <property type="evidence" value="ECO:0000250"/>
    <property type="project" value="FlyBase"/>
</dbReference>
<dbReference type="GO" id="GO:0005739">
    <property type="term" value="C:mitochondrion"/>
    <property type="evidence" value="ECO:0000250"/>
    <property type="project" value="FlyBase"/>
</dbReference>
<dbReference type="GO" id="GO:0051537">
    <property type="term" value="F:2 iron, 2 sulfur cluster binding"/>
    <property type="evidence" value="ECO:0007669"/>
    <property type="project" value="UniProtKB-KW"/>
</dbReference>
<dbReference type="GO" id="GO:0009055">
    <property type="term" value="F:electron transfer activity"/>
    <property type="evidence" value="ECO:0000250"/>
    <property type="project" value="FlyBase"/>
</dbReference>
<dbReference type="GO" id="GO:0046872">
    <property type="term" value="F:metal ion binding"/>
    <property type="evidence" value="ECO:0007669"/>
    <property type="project" value="UniProtKB-KW"/>
</dbReference>
<dbReference type="GO" id="GO:0022900">
    <property type="term" value="P:electron transport chain"/>
    <property type="evidence" value="ECO:0000318"/>
    <property type="project" value="GO_Central"/>
</dbReference>
<dbReference type="GO" id="GO:0140647">
    <property type="term" value="P:P450-containing electron transport chain"/>
    <property type="evidence" value="ECO:0007669"/>
    <property type="project" value="InterPro"/>
</dbReference>
<dbReference type="GO" id="GO:0045998">
    <property type="term" value="P:positive regulation of ecdysteroid biosynthetic process"/>
    <property type="evidence" value="ECO:0000315"/>
    <property type="project" value="FlyBase"/>
</dbReference>
<dbReference type="GO" id="GO:0006694">
    <property type="term" value="P:steroid biosynthetic process"/>
    <property type="evidence" value="ECO:0007669"/>
    <property type="project" value="UniProtKB-KW"/>
</dbReference>
<dbReference type="FunFam" id="3.10.20.30:FF:000013">
    <property type="entry name" value="Adrenodoxin, mitochondrial"/>
    <property type="match status" value="1"/>
</dbReference>
<dbReference type="Gene3D" id="3.10.20.30">
    <property type="match status" value="1"/>
</dbReference>
<dbReference type="InterPro" id="IPR036010">
    <property type="entry name" value="2Fe-2S_ferredoxin-like_sf"/>
</dbReference>
<dbReference type="InterPro" id="IPR001041">
    <property type="entry name" value="2Fe-2S_ferredoxin-type"/>
</dbReference>
<dbReference type="InterPro" id="IPR001055">
    <property type="entry name" value="Adrenodoxin-like"/>
</dbReference>
<dbReference type="InterPro" id="IPR018298">
    <property type="entry name" value="Adrenodoxin_Fe-S_BS"/>
</dbReference>
<dbReference type="InterPro" id="IPR012675">
    <property type="entry name" value="Beta-grasp_dom_sf"/>
</dbReference>
<dbReference type="PANTHER" id="PTHR23426:SF76">
    <property type="entry name" value="ADRENODOXIN-LIKE PROTEIN 2, MITOCHONDRIAL"/>
    <property type="match status" value="1"/>
</dbReference>
<dbReference type="PANTHER" id="PTHR23426">
    <property type="entry name" value="FERREDOXIN/ADRENODOXIN"/>
    <property type="match status" value="1"/>
</dbReference>
<dbReference type="Pfam" id="PF00111">
    <property type="entry name" value="Fer2"/>
    <property type="match status" value="1"/>
</dbReference>
<dbReference type="PRINTS" id="PR00355">
    <property type="entry name" value="ADRENODOXIN"/>
</dbReference>
<dbReference type="SUPFAM" id="SSF54292">
    <property type="entry name" value="2Fe-2S ferredoxin-like"/>
    <property type="match status" value="1"/>
</dbReference>
<dbReference type="PROSITE" id="PS51085">
    <property type="entry name" value="2FE2S_FER_2"/>
    <property type="match status" value="1"/>
</dbReference>
<dbReference type="PROSITE" id="PS00814">
    <property type="entry name" value="ADX"/>
    <property type="match status" value="1"/>
</dbReference>
<comment type="function">
    <text evidence="3">Required for ecdysteroidogenesis in the prothoracic gland which is necessary for larval to pupal transition.</text>
</comment>
<comment type="cofactor">
    <cofactor evidence="2">
        <name>[2Fe-2S] cluster</name>
        <dbReference type="ChEBI" id="CHEBI:190135"/>
    </cofactor>
    <text evidence="2">Binds 1 [2Fe-2S] cluster.</text>
</comment>
<comment type="subcellular location">
    <subcellularLocation>
        <location evidence="1">Mitochondrion</location>
    </subcellularLocation>
</comment>
<comment type="disruption phenotype">
    <text evidence="3">RNAi-mediated knockdown results in larval growth defects, strong larval lethality and strong reduction of ecdysteroid peak level required to proceed to pupal stage (PubMed:25628335). RNAi-mediated knockdown in the prothoracic gland results in larval growth defects and lethality at the third larval stage, with a complete lack of pupariation (PubMed:25628335).</text>
</comment>
<comment type="similarity">
    <text evidence="4">Belongs to the adrenodoxin/putidaredoxin family.</text>
</comment>
<accession>Q8SZA8</accession>
<accession>Q9VZE1</accession>
<organism evidence="9">
    <name type="scientific">Drosophila melanogaster</name>
    <name type="common">Fruit fly</name>
    <dbReference type="NCBI Taxonomy" id="7227"/>
    <lineage>
        <taxon>Eukaryota</taxon>
        <taxon>Metazoa</taxon>
        <taxon>Ecdysozoa</taxon>
        <taxon>Arthropoda</taxon>
        <taxon>Hexapoda</taxon>
        <taxon>Insecta</taxon>
        <taxon>Pterygota</taxon>
        <taxon>Neoptera</taxon>
        <taxon>Endopterygota</taxon>
        <taxon>Diptera</taxon>
        <taxon>Brachycera</taxon>
        <taxon>Muscomorpha</taxon>
        <taxon>Ephydroidea</taxon>
        <taxon>Drosophilidae</taxon>
        <taxon>Drosophila</taxon>
        <taxon>Sophophora</taxon>
    </lineage>
</organism>
<evidence type="ECO:0000255" key="1"/>
<evidence type="ECO:0000255" key="2">
    <source>
        <dbReference type="PROSITE-ProRule" id="PRU00465"/>
    </source>
</evidence>
<evidence type="ECO:0000269" key="3">
    <source>
    </source>
</evidence>
<evidence type="ECO:0000305" key="4"/>
<evidence type="ECO:0000312" key="5">
    <source>
        <dbReference type="EMBL" id="AAL48623.1"/>
    </source>
</evidence>
<evidence type="ECO:0000312" key="6">
    <source>
        <dbReference type="EMBL" id="AAM51020.1"/>
    </source>
</evidence>
<evidence type="ECO:0000312" key="7">
    <source>
        <dbReference type="EMBL" id="ANY27736.1"/>
    </source>
</evidence>
<evidence type="ECO:0000312" key="8">
    <source>
        <dbReference type="FlyBase" id="FBgn0035529"/>
    </source>
</evidence>
<evidence type="ECO:0000312" key="9">
    <source>
        <dbReference type="Proteomes" id="UP000000803"/>
    </source>
</evidence>
<protein>
    <recommendedName>
        <fullName evidence="4">Adrenodoxin-like protein 2, mitochondrial</fullName>
    </recommendedName>
    <alternativeName>
        <fullName evidence="8">Ferredoxin-2</fullName>
    </alternativeName>
</protein>
<reference evidence="9" key="1">
    <citation type="journal article" date="2000" name="Science">
        <title>The genome sequence of Drosophila melanogaster.</title>
        <authorList>
            <person name="Adams M.D."/>
            <person name="Celniker S.E."/>
            <person name="Holt R.A."/>
            <person name="Evans C.A."/>
            <person name="Gocayne J.D."/>
            <person name="Amanatides P.G."/>
            <person name="Scherer S.E."/>
            <person name="Li P.W."/>
            <person name="Hoskins R.A."/>
            <person name="Galle R.F."/>
            <person name="George R.A."/>
            <person name="Lewis S.E."/>
            <person name="Richards S."/>
            <person name="Ashburner M."/>
            <person name="Henderson S.N."/>
            <person name="Sutton G.G."/>
            <person name="Wortman J.R."/>
            <person name="Yandell M.D."/>
            <person name="Zhang Q."/>
            <person name="Chen L.X."/>
            <person name="Brandon R.C."/>
            <person name="Rogers Y.-H.C."/>
            <person name="Blazej R.G."/>
            <person name="Champe M."/>
            <person name="Pfeiffer B.D."/>
            <person name="Wan K.H."/>
            <person name="Doyle C."/>
            <person name="Baxter E.G."/>
            <person name="Helt G."/>
            <person name="Nelson C.R."/>
            <person name="Miklos G.L.G."/>
            <person name="Abril J.F."/>
            <person name="Agbayani A."/>
            <person name="An H.-J."/>
            <person name="Andrews-Pfannkoch C."/>
            <person name="Baldwin D."/>
            <person name="Ballew R.M."/>
            <person name="Basu A."/>
            <person name="Baxendale J."/>
            <person name="Bayraktaroglu L."/>
            <person name="Beasley E.M."/>
            <person name="Beeson K.Y."/>
            <person name="Benos P.V."/>
            <person name="Berman B.P."/>
            <person name="Bhandari D."/>
            <person name="Bolshakov S."/>
            <person name="Borkova D."/>
            <person name="Botchan M.R."/>
            <person name="Bouck J."/>
            <person name="Brokstein P."/>
            <person name="Brottier P."/>
            <person name="Burtis K.C."/>
            <person name="Busam D.A."/>
            <person name="Butler H."/>
            <person name="Cadieu E."/>
            <person name="Center A."/>
            <person name="Chandra I."/>
            <person name="Cherry J.M."/>
            <person name="Cawley S."/>
            <person name="Dahlke C."/>
            <person name="Davenport L.B."/>
            <person name="Davies P."/>
            <person name="de Pablos B."/>
            <person name="Delcher A."/>
            <person name="Deng Z."/>
            <person name="Mays A.D."/>
            <person name="Dew I."/>
            <person name="Dietz S.M."/>
            <person name="Dodson K."/>
            <person name="Doup L.E."/>
            <person name="Downes M."/>
            <person name="Dugan-Rocha S."/>
            <person name="Dunkov B.C."/>
            <person name="Dunn P."/>
            <person name="Durbin K.J."/>
            <person name="Evangelista C.C."/>
            <person name="Ferraz C."/>
            <person name="Ferriera S."/>
            <person name="Fleischmann W."/>
            <person name="Fosler C."/>
            <person name="Gabrielian A.E."/>
            <person name="Garg N.S."/>
            <person name="Gelbart W.M."/>
            <person name="Glasser K."/>
            <person name="Glodek A."/>
            <person name="Gong F."/>
            <person name="Gorrell J.H."/>
            <person name="Gu Z."/>
            <person name="Guan P."/>
            <person name="Harris M."/>
            <person name="Harris N.L."/>
            <person name="Harvey D.A."/>
            <person name="Heiman T.J."/>
            <person name="Hernandez J.R."/>
            <person name="Houck J."/>
            <person name="Hostin D."/>
            <person name="Houston K.A."/>
            <person name="Howland T.J."/>
            <person name="Wei M.-H."/>
            <person name="Ibegwam C."/>
            <person name="Jalali M."/>
            <person name="Kalush F."/>
            <person name="Karpen G.H."/>
            <person name="Ke Z."/>
            <person name="Kennison J.A."/>
            <person name="Ketchum K.A."/>
            <person name="Kimmel B.E."/>
            <person name="Kodira C.D."/>
            <person name="Kraft C.L."/>
            <person name="Kravitz S."/>
            <person name="Kulp D."/>
            <person name="Lai Z."/>
            <person name="Lasko P."/>
            <person name="Lei Y."/>
            <person name="Levitsky A.A."/>
            <person name="Li J.H."/>
            <person name="Li Z."/>
            <person name="Liang Y."/>
            <person name="Lin X."/>
            <person name="Liu X."/>
            <person name="Mattei B."/>
            <person name="McIntosh T.C."/>
            <person name="McLeod M.P."/>
            <person name="McPherson D."/>
            <person name="Merkulov G."/>
            <person name="Milshina N.V."/>
            <person name="Mobarry C."/>
            <person name="Morris J."/>
            <person name="Moshrefi A."/>
            <person name="Mount S.M."/>
            <person name="Moy M."/>
            <person name="Murphy B."/>
            <person name="Murphy L."/>
            <person name="Muzny D.M."/>
            <person name="Nelson D.L."/>
            <person name="Nelson D.R."/>
            <person name="Nelson K.A."/>
            <person name="Nixon K."/>
            <person name="Nusskern D.R."/>
            <person name="Pacleb J.M."/>
            <person name="Palazzolo M."/>
            <person name="Pittman G.S."/>
            <person name="Pan S."/>
            <person name="Pollard J."/>
            <person name="Puri V."/>
            <person name="Reese M.G."/>
            <person name="Reinert K."/>
            <person name="Remington K."/>
            <person name="Saunders R.D.C."/>
            <person name="Scheeler F."/>
            <person name="Shen H."/>
            <person name="Shue B.C."/>
            <person name="Siden-Kiamos I."/>
            <person name="Simpson M."/>
            <person name="Skupski M.P."/>
            <person name="Smith T.J."/>
            <person name="Spier E."/>
            <person name="Spradling A.C."/>
            <person name="Stapleton M."/>
            <person name="Strong R."/>
            <person name="Sun E."/>
            <person name="Svirskas R."/>
            <person name="Tector C."/>
            <person name="Turner R."/>
            <person name="Venter E."/>
            <person name="Wang A.H."/>
            <person name="Wang X."/>
            <person name="Wang Z.-Y."/>
            <person name="Wassarman D.A."/>
            <person name="Weinstock G.M."/>
            <person name="Weissenbach J."/>
            <person name="Williams S.M."/>
            <person name="Woodage T."/>
            <person name="Worley K.C."/>
            <person name="Wu D."/>
            <person name="Yang S."/>
            <person name="Yao Q.A."/>
            <person name="Ye J."/>
            <person name="Yeh R.-F."/>
            <person name="Zaveri J.S."/>
            <person name="Zhan M."/>
            <person name="Zhang G."/>
            <person name="Zhao Q."/>
            <person name="Zheng L."/>
            <person name="Zheng X.H."/>
            <person name="Zhong F.N."/>
            <person name="Zhong W."/>
            <person name="Zhou X."/>
            <person name="Zhu S.C."/>
            <person name="Zhu X."/>
            <person name="Smith H.O."/>
            <person name="Gibbs R.A."/>
            <person name="Myers E.W."/>
            <person name="Rubin G.M."/>
            <person name="Venter J.C."/>
        </authorList>
    </citation>
    <scope>NUCLEOTIDE SEQUENCE [LARGE SCALE GENOMIC DNA]</scope>
    <source>
        <strain evidence="9">Berkeley</strain>
    </source>
</reference>
<reference evidence="9" key="2">
    <citation type="journal article" date="2002" name="Genome Biol.">
        <title>Annotation of the Drosophila melanogaster euchromatic genome: a systematic review.</title>
        <authorList>
            <person name="Misra S."/>
            <person name="Crosby M.A."/>
            <person name="Mungall C.J."/>
            <person name="Matthews B.B."/>
            <person name="Campbell K.S."/>
            <person name="Hradecky P."/>
            <person name="Huang Y."/>
            <person name="Kaminker J.S."/>
            <person name="Millburn G.H."/>
            <person name="Prochnik S.E."/>
            <person name="Smith C.D."/>
            <person name="Tupy J.L."/>
            <person name="Whitfield E.J."/>
            <person name="Bayraktaroglu L."/>
            <person name="Berman B.P."/>
            <person name="Bettencourt B.R."/>
            <person name="Celniker S.E."/>
            <person name="de Grey A.D.N.J."/>
            <person name="Drysdale R.A."/>
            <person name="Harris N.L."/>
            <person name="Richter J."/>
            <person name="Russo S."/>
            <person name="Schroeder A.J."/>
            <person name="Shu S.Q."/>
            <person name="Stapleton M."/>
            <person name="Yamada C."/>
            <person name="Ashburner M."/>
            <person name="Gelbart W.M."/>
            <person name="Rubin G.M."/>
            <person name="Lewis S.E."/>
        </authorList>
    </citation>
    <scope>GENOME REANNOTATION</scope>
    <source>
        <strain evidence="9">Berkeley</strain>
    </source>
</reference>
<reference evidence="5 6" key="3">
    <citation type="journal article" date="2002" name="Genome Biol.">
        <title>A Drosophila full-length cDNA resource.</title>
        <authorList>
            <person name="Stapleton M."/>
            <person name="Carlson J.W."/>
            <person name="Brokstein P."/>
            <person name="Yu C."/>
            <person name="Champe M."/>
            <person name="George R.A."/>
            <person name="Guarin H."/>
            <person name="Kronmiller B."/>
            <person name="Pacleb J.M."/>
            <person name="Park S."/>
            <person name="Wan K.H."/>
            <person name="Rubin G.M."/>
            <person name="Celniker S.E."/>
        </authorList>
    </citation>
    <scope>NUCLEOTIDE SEQUENCE [LARGE SCALE MRNA]</scope>
    <source>
        <strain evidence="5 6">Berkeley</strain>
        <tissue evidence="5">Embryo</tissue>
        <tissue evidence="6">Head</tissue>
    </source>
</reference>
<reference evidence="7" key="4">
    <citation type="submission" date="2016-07" db="EMBL/GenBank/DDBJ databases">
        <authorList>
            <person name="Wan K."/>
            <person name="Booth B."/>
            <person name="Spirohn K."/>
            <person name="Hao T."/>
            <person name="Hu Y."/>
            <person name="Calderwood M."/>
            <person name="Hill D."/>
            <person name="Mohr S."/>
            <person name="Vidal M."/>
            <person name="Celniker S."/>
            <person name="Perrimon N."/>
        </authorList>
    </citation>
    <scope>NUCLEOTIDE SEQUENCE [LARGE SCALE MRNA]</scope>
</reference>
<reference key="5">
    <citation type="journal article" date="2015" name="Hum. Mol. Genet.">
        <title>Frataxin inactivation leads to steroid deficiency in flies and human ovarian cells.</title>
        <authorList>
            <person name="Palandri A."/>
            <person name="L'hote D."/>
            <person name="Cohen-Tannoudji J."/>
            <person name="Tricoire H."/>
            <person name="Monnier V."/>
        </authorList>
    </citation>
    <scope>FUNCTION</scope>
    <scope>DISRUPTION PHENOTYPE</scope>
</reference>
<keyword id="KW-0001">2Fe-2S</keyword>
<keyword id="KW-0249">Electron transport</keyword>
<keyword id="KW-0408">Iron</keyword>
<keyword id="KW-0411">Iron-sulfur</keyword>
<keyword id="KW-0443">Lipid metabolism</keyword>
<keyword id="KW-0479">Metal-binding</keyword>
<keyword id="KW-0496">Mitochondrion</keyword>
<keyword id="KW-1185">Reference proteome</keyword>
<keyword id="KW-0753">Steroid metabolism</keyword>
<keyword id="KW-0755">Steroidogenesis</keyword>
<keyword id="KW-0809">Transit peptide</keyword>
<keyword id="KW-0813">Transport</keyword>
<feature type="transit peptide" description="Mitochondrion" evidence="1">
    <location>
        <begin position="1"/>
        <end position="29"/>
    </location>
</feature>
<feature type="chain" id="PRO_0000447491" description="Adrenodoxin-like protein 2, mitochondrial" evidence="1">
    <location>
        <begin position="30"/>
        <end position="152"/>
    </location>
</feature>
<feature type="domain" description="2Fe-2S ferredoxin-type" evidence="2">
    <location>
        <begin position="41"/>
        <end position="146"/>
    </location>
</feature>
<feature type="binding site" evidence="2">
    <location>
        <position position="80"/>
    </location>
    <ligand>
        <name>[2Fe-2S] cluster</name>
        <dbReference type="ChEBI" id="CHEBI:190135"/>
    </ligand>
</feature>
<feature type="binding site" evidence="2">
    <location>
        <position position="86"/>
    </location>
    <ligand>
        <name>[2Fe-2S] cluster</name>
        <dbReference type="ChEBI" id="CHEBI:190135"/>
    </ligand>
</feature>
<feature type="binding site" evidence="2">
    <location>
        <position position="89"/>
    </location>
    <ligand>
        <name>[2Fe-2S] cluster</name>
        <dbReference type="ChEBI" id="CHEBI:190135"/>
    </ligand>
</feature>
<feature type="binding site" evidence="2">
    <location>
        <position position="127"/>
    </location>
    <ligand>
        <name>[2Fe-2S] cluster</name>
        <dbReference type="ChEBI" id="CHEBI:190135"/>
    </ligand>
</feature>
<sequence>MLVINSCRAASRLALRSLNLRSPIATRTFSTGLALKTKDVVNITFVRANGDKIKTSGKVGDSLLDVVVNNNVDLDGFGACEGTLTCSTCHLIFKTSDFEKLPDKPGDEELDMLDLAYELTDTSRLGCQITLSKDMEGLEVHVPSTINDARAA</sequence>